<proteinExistence type="evidence at protein level"/>
<name>CAER1_XENLA</name>
<accession>P05222</accession>
<accession>P87485</accession>
<accession>Q91722</accession>
<organism>
    <name type="scientific">Xenopus laevis</name>
    <name type="common">African clawed frog</name>
    <dbReference type="NCBI Taxonomy" id="8355"/>
    <lineage>
        <taxon>Eukaryota</taxon>
        <taxon>Metazoa</taxon>
        <taxon>Chordata</taxon>
        <taxon>Craniata</taxon>
        <taxon>Vertebrata</taxon>
        <taxon>Euteleostomi</taxon>
        <taxon>Amphibia</taxon>
        <taxon>Batrachia</taxon>
        <taxon>Anura</taxon>
        <taxon>Pipoidea</taxon>
        <taxon>Pipidae</taxon>
        <taxon>Xenopodinae</taxon>
        <taxon>Xenopus</taxon>
        <taxon>Xenopus</taxon>
    </lineage>
</organism>
<dbReference type="EMBL" id="M12304">
    <property type="protein sequence ID" value="AAA49686.1"/>
    <property type="molecule type" value="mRNA"/>
</dbReference>
<dbReference type="EMBL" id="M27984">
    <property type="protein sequence ID" value="AAA49688.1"/>
    <property type="molecule type" value="Genomic_DNA"/>
</dbReference>
<dbReference type="EMBL" id="M27980">
    <property type="protein sequence ID" value="AAA49688.1"/>
    <property type="status" value="JOINED"/>
    <property type="molecule type" value="Genomic_DNA"/>
</dbReference>
<dbReference type="EMBL" id="M27981">
    <property type="protein sequence ID" value="AAA49688.1"/>
    <property type="status" value="JOINED"/>
    <property type="molecule type" value="Genomic_DNA"/>
</dbReference>
<dbReference type="EMBL" id="M27982">
    <property type="protein sequence ID" value="AAA49688.1"/>
    <property type="status" value="JOINED"/>
    <property type="molecule type" value="Genomic_DNA"/>
</dbReference>
<dbReference type="EMBL" id="M27983">
    <property type="protein sequence ID" value="AAA49688.1"/>
    <property type="status" value="JOINED"/>
    <property type="molecule type" value="Genomic_DNA"/>
</dbReference>
<dbReference type="EMBL" id="M12454">
    <property type="protein sequence ID" value="AAA49691.1"/>
    <property type="molecule type" value="mRNA"/>
</dbReference>
<dbReference type="EMBL" id="K00930">
    <property type="protein sequence ID" value="AAA49682.1"/>
    <property type="molecule type" value="mRNA"/>
</dbReference>
<dbReference type="PIR" id="A23364">
    <property type="entry name" value="A23364"/>
</dbReference>
<dbReference type="RefSeq" id="NP_001081262.1">
    <property type="nucleotide sequence ID" value="NM_001087793.1"/>
</dbReference>
<dbReference type="GeneID" id="397740"/>
<dbReference type="CTD" id="397740"/>
<dbReference type="Proteomes" id="UP000186698">
    <property type="component" value="Unplaced"/>
</dbReference>
<dbReference type="GO" id="GO:0005576">
    <property type="term" value="C:extracellular region"/>
    <property type="evidence" value="ECO:0007669"/>
    <property type="project" value="UniProtKB-SubCell"/>
</dbReference>
<dbReference type="GO" id="GO:0005179">
    <property type="term" value="F:hormone activity"/>
    <property type="evidence" value="ECO:0007669"/>
    <property type="project" value="InterPro"/>
</dbReference>
<dbReference type="GO" id="GO:0006952">
    <property type="term" value="P:defense response"/>
    <property type="evidence" value="ECO:0007669"/>
    <property type="project" value="UniProtKB-KW"/>
</dbReference>
<dbReference type="InterPro" id="IPR001651">
    <property type="entry name" value="Gastrin/CCK"/>
</dbReference>
<dbReference type="InterPro" id="IPR013152">
    <property type="entry name" value="Gastrin/cholecystokinin_CS"/>
</dbReference>
<dbReference type="Pfam" id="PF00918">
    <property type="entry name" value="Gastrin"/>
    <property type="match status" value="1"/>
</dbReference>
<dbReference type="PROSITE" id="PS00259">
    <property type="entry name" value="GASTRIN"/>
    <property type="match status" value="1"/>
</dbReference>
<sequence length="188" mass="20505">MFKGILLCVLFAVLSANPLSQPEGFADEERDVRGLASFLGKALKAGLKIGAHLLGGAPQQREANDERRFADDDDDVNERDVRGFASFLGKALKAALKIGANMLGGTPQQREANDERRFADDEDDVNERDVRGFGSFLGKALKAALKIGANALGGSPQQREANDERRFADGQQDYTGWMDFGRRNGEDD</sequence>
<reference key="1">
    <citation type="journal article" date="1986" name="J. Biol. Chem.">
        <title>Sequence of preprocaerulein cDNAs cloned from skin of Xenopus laevis. A small family of precursors containing one, three, or four copies of the final product.</title>
        <authorList>
            <person name="Richter K."/>
            <person name="Egger R."/>
            <person name="Kreil G."/>
        </authorList>
    </citation>
    <scope>NUCLEOTIDE SEQUENCE [MRNA]</scope>
    <source>
        <tissue>Skin</tissue>
    </source>
</reference>
<reference key="2">
    <citation type="journal article" date="1987" name="Eur. J. Biochem.">
        <title>Conserved exon-intron organization in two different caerulein precursor genes of Xenopus laevis. Additional detection of an exon potentially coding for a new peptide.</title>
        <authorList>
            <person name="Vlasak R."/>
            <person name="Wiborg O."/>
            <person name="Richter K."/>
            <person name="Burgschwaiger S."/>
            <person name="Vuust J."/>
            <person name="Kreil G."/>
        </authorList>
    </citation>
    <scope>NUCLEOTIDE SEQUENCE [GENOMIC DNA]</scope>
</reference>
<reference key="3">
    <citation type="journal article" date="1989" name="Eur. J. Biochem.">
        <title>The genes for the frog skin peptides GLa, xenopsin, levitide and caerulein contain a homologous export exon encoding a signal sequence and part of an amphiphilic peptide.</title>
        <authorList>
            <person name="Kuchler K."/>
            <person name="Kreil G."/>
            <person name="Sures I."/>
        </authorList>
    </citation>
    <scope>NUCLEOTIDE SEQUENCE OF 1-49</scope>
</reference>
<reference key="4">
    <citation type="journal article" date="1984" name="Gene">
        <title>An unusual repetitive structure of caerulein mRNA from the skin of Xenopus laevis.</title>
        <authorList>
            <person name="Wakabayashi T."/>
            <person name="Kato H."/>
            <person name="Tachibana S."/>
        </authorList>
    </citation>
    <scope>NUCLEOTIDE SEQUENCE [MRNA] OF 55-188 (CLONE PXC204)</scope>
</reference>
<reference key="5">
    <citation type="journal article" date="1983" name="EMBO J.">
        <title>Biosynthesis of caerulein in the skin of Xenopus laevis: partial sequences of precursors as deduced from cDNA clones.</title>
        <authorList>
            <person name="Hoffmann W."/>
            <person name="Bach T.C."/>
            <person name="Seliger H."/>
            <person name="Kreil G."/>
        </authorList>
    </citation>
    <scope>NUCLEOTIDE SEQUENCE [MRNA] OF 115-188 (CLONE PUF262)</scope>
</reference>
<reference key="6">
    <citation type="journal article" date="1970" name="Br. J. Pharmacol.">
        <title>Presence of caerulein in extracts of the skin of Leptodactylus pentadactylus labyrinthicus and of Xenopus laevis.</title>
        <authorList>
            <person name="Anastasi A."/>
            <person name="Bertaccini G."/>
            <person name="Cei J.M."/>
            <person name="de Daro G."/>
            <person name="Erspamer V."/>
            <person name="Impicciatore M."/>
            <person name="Roseghini M."/>
        </authorList>
    </citation>
    <scope>PROTEIN SEQUENCE OF 171-180</scope>
    <source>
        <tissue>Skin secretion</tissue>
    </source>
</reference>
<keyword id="KW-0027">Amidation</keyword>
<keyword id="KW-0878">Amphibian defense peptide</keyword>
<keyword id="KW-0165">Cleavage on pair of basic residues</keyword>
<keyword id="KW-0903">Direct protein sequencing</keyword>
<keyword id="KW-1185">Reference proteome</keyword>
<keyword id="KW-0964">Secreted</keyword>
<keyword id="KW-0732">Signal</keyword>
<keyword id="KW-0765">Sulfation</keyword>
<feature type="signal peptide" evidence="2">
    <location>
        <begin position="1"/>
        <end position="26"/>
    </location>
</feature>
<feature type="propeptide" id="PRO_0000010493" evidence="4">
    <location>
        <begin position="27"/>
        <end position="170"/>
    </location>
</feature>
<feature type="peptide" id="PRO_0000010494" description="Caerulein">
    <location>
        <begin position="171"/>
        <end position="180"/>
    </location>
</feature>
<feature type="propeptide" id="PRO_0000010495">
    <location>
        <begin position="184"/>
        <end position="188"/>
    </location>
</feature>
<feature type="region of interest" description="Disordered" evidence="3">
    <location>
        <begin position="152"/>
        <end position="188"/>
    </location>
</feature>
<feature type="modified residue" description="Sulfotyrosine" evidence="1">
    <location>
        <position position="174"/>
    </location>
</feature>
<feature type="modified residue" description="Phenylalanine amide" evidence="1">
    <location>
        <position position="180"/>
    </location>
</feature>
<feature type="sequence variant" description="In clone PXC204.">
    <original>A</original>
    <variation>S</variation>
    <location>
        <position position="57"/>
    </location>
</feature>
<feature type="sequence variant" description="In clone PXC204.">
    <original>A</original>
    <variation>G</variation>
    <location>
        <position position="85"/>
    </location>
</feature>
<feature type="sequence variant" description="In clone PXC204.">
    <original>TP</original>
    <variation>SL</variation>
    <location>
        <begin position="106"/>
        <end position="107"/>
    </location>
</feature>
<feature type="sequence variant" description="In clone PXC204.">
    <original>A</original>
    <variation>V</variation>
    <location>
        <position position="112"/>
    </location>
</feature>
<feature type="sequence conflict" description="In Ref. 2; AAA49688." evidence="5" ref="2">
    <location>
        <position position="75"/>
    </location>
</feature>
<feature type="sequence conflict" description="In Ref. 2; AAA49688." evidence="5" ref="2">
    <original>I</original>
    <variation>SKLEHSF</variation>
    <location>
        <position position="147"/>
    </location>
</feature>
<comment type="function">
    <text>The pharmacological activities of caerulein are quite similar to the physiological activities of gastrin and related peptides.</text>
</comment>
<comment type="subcellular location">
    <subcellularLocation>
        <location>Secreted</location>
    </subcellularLocation>
</comment>
<comment type="tissue specificity">
    <text>Expressed by the skin glands.</text>
</comment>
<comment type="similarity">
    <text evidence="5">Belongs to the gastrin/cholecystokinin family.</text>
</comment>
<evidence type="ECO:0000250" key="1"/>
<evidence type="ECO:0000255" key="2"/>
<evidence type="ECO:0000256" key="3">
    <source>
        <dbReference type="SAM" id="MobiDB-lite"/>
    </source>
</evidence>
<evidence type="ECO:0000269" key="4">
    <source>
    </source>
</evidence>
<evidence type="ECO:0000305" key="5"/>
<protein>
    <recommendedName>
        <fullName>Preprocaerulein type-1</fullName>
    </recommendedName>
    <alternativeName>
        <fullName>Preprocaerulein type I</fullName>
    </alternativeName>
    <component>
        <recommendedName>
            <fullName>Caerulein</fullName>
        </recommendedName>
    </component>
</protein>